<organism>
    <name type="scientific">Roseiflexus sp. (strain RS-1)</name>
    <dbReference type="NCBI Taxonomy" id="357808"/>
    <lineage>
        <taxon>Bacteria</taxon>
        <taxon>Bacillati</taxon>
        <taxon>Chloroflexota</taxon>
        <taxon>Chloroflexia</taxon>
        <taxon>Chloroflexales</taxon>
        <taxon>Roseiflexineae</taxon>
        <taxon>Roseiflexaceae</taxon>
        <taxon>Roseiflexus</taxon>
    </lineage>
</organism>
<dbReference type="EC" id="2.1.1.77" evidence="1"/>
<dbReference type="EMBL" id="CP000686">
    <property type="protein sequence ID" value="ABQ92165.1"/>
    <property type="molecule type" value="Genomic_DNA"/>
</dbReference>
<dbReference type="RefSeq" id="WP_011958506.1">
    <property type="nucleotide sequence ID" value="NC_009523.1"/>
</dbReference>
<dbReference type="SMR" id="A5UZW2"/>
<dbReference type="STRING" id="357808.RoseRS_3811"/>
<dbReference type="KEGG" id="rrs:RoseRS_3811"/>
<dbReference type="eggNOG" id="COG2518">
    <property type="taxonomic scope" value="Bacteria"/>
</dbReference>
<dbReference type="HOGENOM" id="CLU_055432_2_0_0"/>
<dbReference type="OrthoDB" id="9772751at2"/>
<dbReference type="Proteomes" id="UP000006554">
    <property type="component" value="Chromosome"/>
</dbReference>
<dbReference type="GO" id="GO:0005737">
    <property type="term" value="C:cytoplasm"/>
    <property type="evidence" value="ECO:0007669"/>
    <property type="project" value="UniProtKB-SubCell"/>
</dbReference>
<dbReference type="GO" id="GO:0004719">
    <property type="term" value="F:protein-L-isoaspartate (D-aspartate) O-methyltransferase activity"/>
    <property type="evidence" value="ECO:0007669"/>
    <property type="project" value="UniProtKB-UniRule"/>
</dbReference>
<dbReference type="GO" id="GO:0032259">
    <property type="term" value="P:methylation"/>
    <property type="evidence" value="ECO:0007669"/>
    <property type="project" value="UniProtKB-KW"/>
</dbReference>
<dbReference type="GO" id="GO:0036211">
    <property type="term" value="P:protein modification process"/>
    <property type="evidence" value="ECO:0007669"/>
    <property type="project" value="UniProtKB-UniRule"/>
</dbReference>
<dbReference type="GO" id="GO:0030091">
    <property type="term" value="P:protein repair"/>
    <property type="evidence" value="ECO:0007669"/>
    <property type="project" value="UniProtKB-UniRule"/>
</dbReference>
<dbReference type="CDD" id="cd02440">
    <property type="entry name" value="AdoMet_MTases"/>
    <property type="match status" value="1"/>
</dbReference>
<dbReference type="FunFam" id="3.40.50.150:FF:000010">
    <property type="entry name" value="Protein-L-isoaspartate O-methyltransferase"/>
    <property type="match status" value="1"/>
</dbReference>
<dbReference type="Gene3D" id="3.40.50.150">
    <property type="entry name" value="Vaccinia Virus protein VP39"/>
    <property type="match status" value="1"/>
</dbReference>
<dbReference type="HAMAP" id="MF_00090">
    <property type="entry name" value="PIMT"/>
    <property type="match status" value="1"/>
</dbReference>
<dbReference type="InterPro" id="IPR000682">
    <property type="entry name" value="PCMT"/>
</dbReference>
<dbReference type="InterPro" id="IPR029063">
    <property type="entry name" value="SAM-dependent_MTases_sf"/>
</dbReference>
<dbReference type="NCBIfam" id="TIGR00080">
    <property type="entry name" value="pimt"/>
    <property type="match status" value="1"/>
</dbReference>
<dbReference type="NCBIfam" id="NF001453">
    <property type="entry name" value="PRK00312.1"/>
    <property type="match status" value="1"/>
</dbReference>
<dbReference type="PANTHER" id="PTHR11579">
    <property type="entry name" value="PROTEIN-L-ISOASPARTATE O-METHYLTRANSFERASE"/>
    <property type="match status" value="1"/>
</dbReference>
<dbReference type="PANTHER" id="PTHR11579:SF0">
    <property type="entry name" value="PROTEIN-L-ISOASPARTATE(D-ASPARTATE) O-METHYLTRANSFERASE"/>
    <property type="match status" value="1"/>
</dbReference>
<dbReference type="Pfam" id="PF01135">
    <property type="entry name" value="PCMT"/>
    <property type="match status" value="1"/>
</dbReference>
<dbReference type="SUPFAM" id="SSF53335">
    <property type="entry name" value="S-adenosyl-L-methionine-dependent methyltransferases"/>
    <property type="match status" value="1"/>
</dbReference>
<dbReference type="PROSITE" id="PS01279">
    <property type="entry name" value="PCMT"/>
    <property type="match status" value="1"/>
</dbReference>
<accession>A5UZW2</accession>
<gene>
    <name evidence="1" type="primary">pcm</name>
    <name type="ordered locus">RoseRS_3811</name>
</gene>
<name>PIMT_ROSS1</name>
<protein>
    <recommendedName>
        <fullName evidence="1">Protein-L-isoaspartate O-methyltransferase</fullName>
        <ecNumber evidence="1">2.1.1.77</ecNumber>
    </recommendedName>
    <alternativeName>
        <fullName evidence="1">L-isoaspartyl protein carboxyl methyltransferase</fullName>
    </alternativeName>
    <alternativeName>
        <fullName evidence="1">Protein L-isoaspartyl methyltransferase</fullName>
    </alternativeName>
    <alternativeName>
        <fullName evidence="1">Protein-beta-aspartate methyltransferase</fullName>
        <shortName evidence="1">PIMT</shortName>
    </alternativeName>
</protein>
<keyword id="KW-0963">Cytoplasm</keyword>
<keyword id="KW-0489">Methyltransferase</keyword>
<keyword id="KW-0949">S-adenosyl-L-methionine</keyword>
<keyword id="KW-0808">Transferase</keyword>
<feature type="chain" id="PRO_0000351930" description="Protein-L-isoaspartate O-methyltransferase">
    <location>
        <begin position="1"/>
        <end position="218"/>
    </location>
</feature>
<feature type="active site" evidence="1">
    <location>
        <position position="60"/>
    </location>
</feature>
<comment type="function">
    <text evidence="1">Catalyzes the methyl esterification of L-isoaspartyl residues in peptides and proteins that result from spontaneous decomposition of normal L-aspartyl and L-asparaginyl residues. It plays a role in the repair and/or degradation of damaged proteins.</text>
</comment>
<comment type="catalytic activity">
    <reaction evidence="1">
        <text>[protein]-L-isoaspartate + S-adenosyl-L-methionine = [protein]-L-isoaspartate alpha-methyl ester + S-adenosyl-L-homocysteine</text>
        <dbReference type="Rhea" id="RHEA:12705"/>
        <dbReference type="Rhea" id="RHEA-COMP:12143"/>
        <dbReference type="Rhea" id="RHEA-COMP:12144"/>
        <dbReference type="ChEBI" id="CHEBI:57856"/>
        <dbReference type="ChEBI" id="CHEBI:59789"/>
        <dbReference type="ChEBI" id="CHEBI:90596"/>
        <dbReference type="ChEBI" id="CHEBI:90598"/>
        <dbReference type="EC" id="2.1.1.77"/>
    </reaction>
</comment>
<comment type="subcellular location">
    <subcellularLocation>
        <location evidence="1">Cytoplasm</location>
    </subcellularLocation>
</comment>
<comment type="similarity">
    <text evidence="1">Belongs to the methyltransferase superfamily. L-isoaspartyl/D-aspartyl protein methyltransferase family.</text>
</comment>
<sequence>MDFANERRAMIDLLVQRGIRDRRVLDAMAQVPRHAFVPENERSFAYSDQALPIGEGQTISQPYMVALMVEALQLAPTDRVLEVGAGSGYAAAVLSRIVAKVHTVECREALAERAVALIQALGYTNITVHIGDGTQGLPDYAPFDAILVSAASPWVPAPLREQLASSGRLVIPVGGRQAQILLRLRREGDTLRTERLCDVRFVPLIGGHAWTAERYPER</sequence>
<evidence type="ECO:0000255" key="1">
    <source>
        <dbReference type="HAMAP-Rule" id="MF_00090"/>
    </source>
</evidence>
<proteinExistence type="inferred from homology"/>
<reference key="1">
    <citation type="submission" date="2007-04" db="EMBL/GenBank/DDBJ databases">
        <title>Complete sequence of Roseiflexus sp. RS-1.</title>
        <authorList>
            <consortium name="US DOE Joint Genome Institute"/>
            <person name="Copeland A."/>
            <person name="Lucas S."/>
            <person name="Lapidus A."/>
            <person name="Barry K."/>
            <person name="Detter J.C."/>
            <person name="Glavina del Rio T."/>
            <person name="Hammon N."/>
            <person name="Israni S."/>
            <person name="Dalin E."/>
            <person name="Tice H."/>
            <person name="Pitluck S."/>
            <person name="Chertkov O."/>
            <person name="Brettin T."/>
            <person name="Bruce D."/>
            <person name="Han C."/>
            <person name="Schmutz J."/>
            <person name="Larimer F."/>
            <person name="Land M."/>
            <person name="Hauser L."/>
            <person name="Kyrpides N."/>
            <person name="Mikhailova N."/>
            <person name="Bryant D.A."/>
            <person name="Richardson P."/>
        </authorList>
    </citation>
    <scope>NUCLEOTIDE SEQUENCE [LARGE SCALE GENOMIC DNA]</scope>
    <source>
        <strain>RS-1</strain>
    </source>
</reference>